<feature type="chain" id="PRO_0000219687" description="Photosystem II reaction center protein L">
    <location>
        <begin position="1"/>
        <end position="38"/>
    </location>
</feature>
<feature type="transmembrane region" description="Helical" evidence="1">
    <location>
        <begin position="17"/>
        <end position="37"/>
    </location>
</feature>
<accession>Q7J1C0</accession>
<evidence type="ECO:0000255" key="1">
    <source>
        <dbReference type="HAMAP-Rule" id="MF_01317"/>
    </source>
</evidence>
<keyword id="KW-0150">Chloroplast</keyword>
<keyword id="KW-0472">Membrane</keyword>
<keyword id="KW-0602">Photosynthesis</keyword>
<keyword id="KW-0604">Photosystem II</keyword>
<keyword id="KW-0934">Plastid</keyword>
<keyword id="KW-0674">Reaction center</keyword>
<keyword id="KW-0793">Thylakoid</keyword>
<keyword id="KW-0812">Transmembrane</keyword>
<keyword id="KW-1133">Transmembrane helix</keyword>
<sequence>MTQSNPNEQNVELNRTSLYWGLLLIFVLAVLFSNYFFN</sequence>
<name>PSBL_CABCA</name>
<organism>
    <name type="scientific">Cabomba caroliniana</name>
    <name type="common">Carolina fanwort</name>
    <dbReference type="NCBI Taxonomy" id="4426"/>
    <lineage>
        <taxon>Eukaryota</taxon>
        <taxon>Viridiplantae</taxon>
        <taxon>Streptophyta</taxon>
        <taxon>Embryophyta</taxon>
        <taxon>Tracheophyta</taxon>
        <taxon>Spermatophyta</taxon>
        <taxon>Magnoliopsida</taxon>
        <taxon>Nymphaeales</taxon>
        <taxon>Cabombaceae</taxon>
        <taxon>Cabomba</taxon>
    </lineage>
</organism>
<gene>
    <name evidence="1" type="primary">psbL</name>
</gene>
<geneLocation type="chloroplast"/>
<protein>
    <recommendedName>
        <fullName evidence="1">Photosystem II reaction center protein L</fullName>
        <shortName evidence="1">PSII-L</shortName>
    </recommendedName>
</protein>
<proteinExistence type="inferred from homology"/>
<comment type="function">
    <text evidence="1">One of the components of the core complex of photosystem II (PSII). PSII is a light-driven water:plastoquinone oxidoreductase that uses light energy to abstract electrons from H(2)O, generating O(2) and a proton gradient subsequently used for ATP formation. It consists of a core antenna complex that captures photons, and an electron transfer chain that converts photonic excitation into a charge separation. This subunit is found at the monomer-monomer interface and is required for correct PSII assembly and/or dimerization.</text>
</comment>
<comment type="subunit">
    <text evidence="1">PSII is composed of 1 copy each of membrane proteins PsbA, PsbB, PsbC, PsbD, PsbE, PsbF, PsbH, PsbI, PsbJ, PsbK, PsbL, PsbM, PsbT, PsbX, PsbY, PsbZ, Psb30/Ycf12, at least 3 peripheral proteins of the oxygen-evolving complex and a large number of cofactors. It forms dimeric complexes.</text>
</comment>
<comment type="subcellular location">
    <subcellularLocation>
        <location evidence="1">Plastid</location>
        <location evidence="1">Chloroplast thylakoid membrane</location>
        <topology evidence="1">Single-pass membrane protein</topology>
    </subcellularLocation>
</comment>
<comment type="similarity">
    <text evidence="1">Belongs to the PsbL family.</text>
</comment>
<dbReference type="EMBL" id="AF123830">
    <property type="protein sequence ID" value="AAG26200.1"/>
    <property type="molecule type" value="Genomic_DNA"/>
</dbReference>
<dbReference type="RefSeq" id="YP_009310533.1">
    <property type="nucleotide sequence ID" value="NC_031505.1"/>
</dbReference>
<dbReference type="SMR" id="Q7J1C0"/>
<dbReference type="GeneID" id="29991296"/>
<dbReference type="GO" id="GO:0009535">
    <property type="term" value="C:chloroplast thylakoid membrane"/>
    <property type="evidence" value="ECO:0007669"/>
    <property type="project" value="UniProtKB-SubCell"/>
</dbReference>
<dbReference type="GO" id="GO:0009539">
    <property type="term" value="C:photosystem II reaction center"/>
    <property type="evidence" value="ECO:0007669"/>
    <property type="project" value="InterPro"/>
</dbReference>
<dbReference type="GO" id="GO:0015979">
    <property type="term" value="P:photosynthesis"/>
    <property type="evidence" value="ECO:0007669"/>
    <property type="project" value="UniProtKB-UniRule"/>
</dbReference>
<dbReference type="HAMAP" id="MF_01317">
    <property type="entry name" value="PSII_PsbL"/>
    <property type="match status" value="1"/>
</dbReference>
<dbReference type="InterPro" id="IPR003372">
    <property type="entry name" value="PSII_PsbL"/>
</dbReference>
<dbReference type="InterPro" id="IPR037266">
    <property type="entry name" value="PSII_PsbL_sf"/>
</dbReference>
<dbReference type="NCBIfam" id="NF001972">
    <property type="entry name" value="PRK00753.1"/>
    <property type="match status" value="1"/>
</dbReference>
<dbReference type="Pfam" id="PF02419">
    <property type="entry name" value="PsbL"/>
    <property type="match status" value="1"/>
</dbReference>
<dbReference type="SUPFAM" id="SSF161017">
    <property type="entry name" value="Photosystem II reaction center protein L, PsbL"/>
    <property type="match status" value="1"/>
</dbReference>
<reference key="1">
    <citation type="journal article" date="2000" name="Am. J. Bot.">
        <title>Utility of 17 chloroplast genes for inferring the phylogeny of the basal angiosperms.</title>
        <authorList>
            <person name="Graham S.W."/>
            <person name="Olmstead R.G."/>
        </authorList>
    </citation>
    <scope>NUCLEOTIDE SEQUENCE [GENOMIC DNA]</scope>
</reference>